<proteinExistence type="evidence at protein level"/>
<name>RS7_RABIT</name>
<gene>
    <name type="primary">RPS7</name>
</gene>
<organism>
    <name type="scientific">Oryctolagus cuniculus</name>
    <name type="common">Rabbit</name>
    <dbReference type="NCBI Taxonomy" id="9986"/>
    <lineage>
        <taxon>Eukaryota</taxon>
        <taxon>Metazoa</taxon>
        <taxon>Chordata</taxon>
        <taxon>Craniata</taxon>
        <taxon>Vertebrata</taxon>
        <taxon>Euteleostomi</taxon>
        <taxon>Mammalia</taxon>
        <taxon>Eutheria</taxon>
        <taxon>Euarchontoglires</taxon>
        <taxon>Glires</taxon>
        <taxon>Lagomorpha</taxon>
        <taxon>Leporidae</taxon>
        <taxon>Oryctolagus</taxon>
    </lineage>
</organism>
<feature type="chain" id="PRO_0000460057" description="Small ribosomal subunit protein eS7">
    <location>
        <begin position="1"/>
        <end position="194"/>
    </location>
</feature>
<feature type="modified residue" description="N-acetylmethionine" evidence="1">
    <location>
        <position position="1"/>
    </location>
</feature>
<feature type="modified residue" description="N6-acetyllysine; alternate" evidence="1">
    <location>
        <position position="74"/>
    </location>
</feature>
<feature type="cross-link" description="Glycyl lysine isopeptide (Lys-Gly) (interchain with G-Cter in SUMO2)" evidence="1">
    <location>
        <position position="70"/>
    </location>
</feature>
<feature type="cross-link" description="Glycyl lysine isopeptide (Lys-Gly) (interchain with G-Cter in SUMO2); alternate" evidence="1">
    <location>
        <position position="74"/>
    </location>
</feature>
<feature type="strand" evidence="46">
    <location>
        <begin position="7"/>
        <end position="10"/>
    </location>
</feature>
<feature type="strand" evidence="47">
    <location>
        <begin position="11"/>
        <end position="13"/>
    </location>
</feature>
<feature type="helix" evidence="47">
    <location>
        <begin position="18"/>
        <end position="28"/>
    </location>
</feature>
<feature type="turn" evidence="47">
    <location>
        <begin position="29"/>
        <end position="33"/>
    </location>
</feature>
<feature type="helix" evidence="49">
    <location>
        <begin position="34"/>
        <end position="36"/>
    </location>
</feature>
<feature type="turn" evidence="47">
    <location>
        <begin position="37"/>
        <end position="41"/>
    </location>
</feature>
<feature type="strand" evidence="47">
    <location>
        <begin position="47"/>
        <end position="53"/>
    </location>
</feature>
<feature type="turn" evidence="47">
    <location>
        <begin position="54"/>
        <end position="56"/>
    </location>
</feature>
<feature type="strand" evidence="47">
    <location>
        <begin position="57"/>
        <end position="64"/>
    </location>
</feature>
<feature type="helix" evidence="47">
    <location>
        <begin position="66"/>
        <end position="73"/>
    </location>
</feature>
<feature type="helix" evidence="47">
    <location>
        <begin position="76"/>
        <end position="86"/>
    </location>
</feature>
<feature type="strand" evidence="47">
    <location>
        <begin position="87"/>
        <end position="89"/>
    </location>
</feature>
<feature type="strand" evidence="47">
    <location>
        <begin position="91"/>
        <end position="96"/>
    </location>
</feature>
<feature type="turn" evidence="46">
    <location>
        <begin position="104"/>
        <end position="107"/>
    </location>
</feature>
<feature type="helix" evidence="47">
    <location>
        <begin position="118"/>
        <end position="120"/>
    </location>
</feature>
<feature type="helix" evidence="47">
    <location>
        <begin position="122"/>
        <end position="133"/>
    </location>
</feature>
<feature type="helix" evidence="46">
    <location>
        <begin position="135"/>
        <end position="137"/>
    </location>
</feature>
<feature type="strand" evidence="47">
    <location>
        <begin position="139"/>
        <end position="146"/>
    </location>
</feature>
<feature type="strand" evidence="47">
    <location>
        <begin position="152"/>
        <end position="158"/>
    </location>
</feature>
<feature type="strand" evidence="46">
    <location>
        <begin position="160"/>
        <end position="162"/>
    </location>
</feature>
<feature type="helix" evidence="47">
    <location>
        <begin position="163"/>
        <end position="166"/>
    </location>
</feature>
<feature type="helix" evidence="45">
    <location>
        <begin position="167"/>
        <end position="169"/>
    </location>
</feature>
<feature type="helix" evidence="47">
    <location>
        <begin position="170"/>
        <end position="180"/>
    </location>
</feature>
<feature type="strand" evidence="47">
    <location>
        <begin position="185"/>
        <end position="188"/>
    </location>
</feature>
<feature type="turn" evidence="48">
    <location>
        <begin position="191"/>
        <end position="193"/>
    </location>
</feature>
<sequence>MFSSSAKIVKPNGEKPDEFESGISQALLELEMNSDLKAQLRELNITAAKEIEVGGGRKAIIIFVPVPQLKSFQKIQVRLVRELEKKFSGKHVVFIAQRRILPKPTRKSRTKNKQKRPRSRTLTAVHDAILEDLVFPSEIVGKRIRVKLDGSRLIKVHLDKAQQNNVEHKVETFSGVYKKLTGKDVNFEFPEFQL</sequence>
<evidence type="ECO:0000250" key="1">
    <source>
        <dbReference type="UniProtKB" id="P62081"/>
    </source>
</evidence>
<evidence type="ECO:0000269" key="2">
    <source>
    </source>
</evidence>
<evidence type="ECO:0000269" key="3">
    <source>
    </source>
</evidence>
<evidence type="ECO:0000269" key="4">
    <source>
    </source>
</evidence>
<evidence type="ECO:0000269" key="5">
    <source>
    </source>
</evidence>
<evidence type="ECO:0000269" key="6">
    <source>
    </source>
</evidence>
<evidence type="ECO:0000269" key="7">
    <source>
    </source>
</evidence>
<evidence type="ECO:0000269" key="8">
    <source>
    </source>
</evidence>
<evidence type="ECO:0000269" key="9">
    <source>
    </source>
</evidence>
<evidence type="ECO:0000269" key="10">
    <source>
    </source>
</evidence>
<evidence type="ECO:0000269" key="11">
    <source>
    </source>
</evidence>
<evidence type="ECO:0000269" key="12">
    <source>
    </source>
</evidence>
<evidence type="ECO:0000269" key="13">
    <source>
    </source>
</evidence>
<evidence type="ECO:0000269" key="14">
    <source>
    </source>
</evidence>
<evidence type="ECO:0000269" key="15">
    <source>
    </source>
</evidence>
<evidence type="ECO:0000269" key="16">
    <source>
    </source>
</evidence>
<evidence type="ECO:0000305" key="17"/>
<evidence type="ECO:0007744" key="18">
    <source>
        <dbReference type="PDB" id="3JAG"/>
    </source>
</evidence>
<evidence type="ECO:0007744" key="19">
    <source>
        <dbReference type="PDB" id="3JAH"/>
    </source>
</evidence>
<evidence type="ECO:0007744" key="20">
    <source>
        <dbReference type="PDB" id="4D5L"/>
    </source>
</evidence>
<evidence type="ECO:0007744" key="21">
    <source>
        <dbReference type="PDB" id="4D61"/>
    </source>
</evidence>
<evidence type="ECO:0007744" key="22">
    <source>
        <dbReference type="PDB" id="4KZX"/>
    </source>
</evidence>
<evidence type="ECO:0007744" key="23">
    <source>
        <dbReference type="PDB" id="4KZY"/>
    </source>
</evidence>
<evidence type="ECO:0007744" key="24">
    <source>
        <dbReference type="PDB" id="5LZS"/>
    </source>
</evidence>
<evidence type="ECO:0007744" key="25">
    <source>
        <dbReference type="PDB" id="5LZT"/>
    </source>
</evidence>
<evidence type="ECO:0007744" key="26">
    <source>
        <dbReference type="PDB" id="6D90"/>
    </source>
</evidence>
<evidence type="ECO:0007744" key="27">
    <source>
        <dbReference type="PDB" id="6D9J"/>
    </source>
</evidence>
<evidence type="ECO:0007744" key="28">
    <source>
        <dbReference type="PDB" id="6GZ3"/>
    </source>
</evidence>
<evidence type="ECO:0007744" key="29">
    <source>
        <dbReference type="PDB" id="6HCF"/>
    </source>
</evidence>
<evidence type="ECO:0007744" key="30">
    <source>
        <dbReference type="PDB" id="6HCJ"/>
    </source>
</evidence>
<evidence type="ECO:0007744" key="31">
    <source>
        <dbReference type="PDB" id="6MTD"/>
    </source>
</evidence>
<evidence type="ECO:0007744" key="32">
    <source>
        <dbReference type="PDB" id="6MTE"/>
    </source>
</evidence>
<evidence type="ECO:0007744" key="33">
    <source>
        <dbReference type="PDB" id="6P5I"/>
    </source>
</evidence>
<evidence type="ECO:0007744" key="34">
    <source>
        <dbReference type="PDB" id="6P5J"/>
    </source>
</evidence>
<evidence type="ECO:0007744" key="35">
    <source>
        <dbReference type="PDB" id="6R5Q"/>
    </source>
</evidence>
<evidence type="ECO:0007744" key="36">
    <source>
        <dbReference type="PDB" id="6R6G"/>
    </source>
</evidence>
<evidence type="ECO:0007744" key="37">
    <source>
        <dbReference type="PDB" id="6SGC"/>
    </source>
</evidence>
<evidence type="ECO:0007744" key="38">
    <source>
        <dbReference type="PDB" id="6W2S"/>
    </source>
</evidence>
<evidence type="ECO:0007744" key="39">
    <source>
        <dbReference type="PDB" id="6W2T"/>
    </source>
</evidence>
<evidence type="ECO:0007744" key="40">
    <source>
        <dbReference type="PDB" id="7OYD"/>
    </source>
</evidence>
<evidence type="ECO:0007744" key="41">
    <source>
        <dbReference type="PDB" id="7SYO"/>
    </source>
</evidence>
<evidence type="ECO:0007744" key="42">
    <source>
        <dbReference type="PDB" id="7SYP"/>
    </source>
</evidence>
<evidence type="ECO:0007744" key="43">
    <source>
        <dbReference type="PDB" id="7ZJW"/>
    </source>
</evidence>
<evidence type="ECO:0007744" key="44">
    <source>
        <dbReference type="PDB" id="7ZJX"/>
    </source>
</evidence>
<evidence type="ECO:0007829" key="45">
    <source>
        <dbReference type="PDB" id="6P4H"/>
    </source>
</evidence>
<evidence type="ECO:0007829" key="46">
    <source>
        <dbReference type="PDB" id="6YAL"/>
    </source>
</evidence>
<evidence type="ECO:0007829" key="47">
    <source>
        <dbReference type="PDB" id="7JQB"/>
    </source>
</evidence>
<evidence type="ECO:0007829" key="48">
    <source>
        <dbReference type="PDB" id="7JQC"/>
    </source>
</evidence>
<evidence type="ECO:0007829" key="49">
    <source>
        <dbReference type="PDB" id="8P09"/>
    </source>
</evidence>
<dbReference type="RefSeq" id="NP_001272763.1">
    <property type="nucleotide sequence ID" value="NM_001285834.1"/>
</dbReference>
<dbReference type="PDB" id="3JAG">
    <property type="method" value="EM"/>
    <property type="resolution" value="3.65 A"/>
    <property type="chains" value="HH=5-193"/>
</dbReference>
<dbReference type="PDB" id="3JAH">
    <property type="method" value="EM"/>
    <property type="resolution" value="3.45 A"/>
    <property type="chains" value="HH=5-193"/>
</dbReference>
<dbReference type="PDB" id="3JAI">
    <property type="method" value="EM"/>
    <property type="resolution" value="3.65 A"/>
    <property type="chains" value="HH=5-193"/>
</dbReference>
<dbReference type="PDB" id="4D5L">
    <property type="method" value="EM"/>
    <property type="resolution" value="9.00 A"/>
    <property type="chains" value="H=1-194"/>
</dbReference>
<dbReference type="PDB" id="4D61">
    <property type="method" value="EM"/>
    <property type="resolution" value="9.00 A"/>
    <property type="chains" value="H=1-194"/>
</dbReference>
<dbReference type="PDB" id="4KZX">
    <property type="method" value="X-ray"/>
    <property type="resolution" value="7.81 A"/>
    <property type="chains" value="H=1-194"/>
</dbReference>
<dbReference type="PDB" id="4KZY">
    <property type="method" value="X-ray"/>
    <property type="resolution" value="7.01 A"/>
    <property type="chains" value="H=1-194"/>
</dbReference>
<dbReference type="PDB" id="4KZZ">
    <property type="method" value="X-ray"/>
    <property type="resolution" value="7.03 A"/>
    <property type="chains" value="H=1-194"/>
</dbReference>
<dbReference type="PDB" id="5K0Y">
    <property type="method" value="EM"/>
    <property type="resolution" value="5.80 A"/>
    <property type="chains" value="X=5-194"/>
</dbReference>
<dbReference type="PDB" id="5LZS">
    <property type="method" value="EM"/>
    <property type="resolution" value="3.31 A"/>
    <property type="chains" value="HH=1-194"/>
</dbReference>
<dbReference type="PDB" id="5LZT">
    <property type="method" value="EM"/>
    <property type="resolution" value="3.65 A"/>
    <property type="chains" value="HH=1-194"/>
</dbReference>
<dbReference type="PDB" id="5LZU">
    <property type="method" value="EM"/>
    <property type="resolution" value="3.75 A"/>
    <property type="chains" value="HH=1-194"/>
</dbReference>
<dbReference type="PDB" id="5LZV">
    <property type="method" value="EM"/>
    <property type="resolution" value="3.35 A"/>
    <property type="chains" value="HH=1-194"/>
</dbReference>
<dbReference type="PDB" id="5LZW">
    <property type="method" value="EM"/>
    <property type="resolution" value="3.53 A"/>
    <property type="chains" value="HH=1-194"/>
</dbReference>
<dbReference type="PDB" id="5LZX">
    <property type="method" value="EM"/>
    <property type="resolution" value="3.67 A"/>
    <property type="chains" value="HH=1-194"/>
</dbReference>
<dbReference type="PDB" id="5LZY">
    <property type="method" value="EM"/>
    <property type="resolution" value="3.99 A"/>
    <property type="chains" value="HH=1-194"/>
</dbReference>
<dbReference type="PDB" id="5LZZ">
    <property type="method" value="EM"/>
    <property type="resolution" value="3.47 A"/>
    <property type="chains" value="HH=1-194"/>
</dbReference>
<dbReference type="PDB" id="6D90">
    <property type="method" value="EM"/>
    <property type="resolution" value="3.20 A"/>
    <property type="chains" value="II=1-194"/>
</dbReference>
<dbReference type="PDB" id="6D9J">
    <property type="method" value="EM"/>
    <property type="resolution" value="3.20 A"/>
    <property type="chains" value="II=1-194"/>
</dbReference>
<dbReference type="PDB" id="6GZ3">
    <property type="method" value="EM"/>
    <property type="resolution" value="3.60 A"/>
    <property type="chains" value="BH=12-194"/>
</dbReference>
<dbReference type="PDB" id="6HCF">
    <property type="method" value="EM"/>
    <property type="resolution" value="3.90 A"/>
    <property type="chains" value="I1=1-194"/>
</dbReference>
<dbReference type="PDB" id="6HCJ">
    <property type="method" value="EM"/>
    <property type="resolution" value="3.80 A"/>
    <property type="chains" value="I2=1-194"/>
</dbReference>
<dbReference type="PDB" id="6HCM">
    <property type="method" value="EM"/>
    <property type="resolution" value="6.80 A"/>
    <property type="chains" value="I1=1-194"/>
</dbReference>
<dbReference type="PDB" id="6HCQ">
    <property type="method" value="EM"/>
    <property type="resolution" value="6.50 A"/>
    <property type="chains" value="I2=1-194"/>
</dbReference>
<dbReference type="PDB" id="6MTB">
    <property type="method" value="EM"/>
    <property type="resolution" value="3.60 A"/>
    <property type="chains" value="HH=1-194"/>
</dbReference>
<dbReference type="PDB" id="6MTC">
    <property type="method" value="EM"/>
    <property type="resolution" value="3.40 A"/>
    <property type="chains" value="HH=1-194"/>
</dbReference>
<dbReference type="PDB" id="6MTD">
    <property type="method" value="EM"/>
    <property type="resolution" value="3.30 A"/>
    <property type="chains" value="HH=1-194"/>
</dbReference>
<dbReference type="PDB" id="6MTE">
    <property type="method" value="EM"/>
    <property type="resolution" value="3.40 A"/>
    <property type="chains" value="HH=1-194"/>
</dbReference>
<dbReference type="PDB" id="6P4G">
    <property type="method" value="EM"/>
    <property type="resolution" value="3.10 A"/>
    <property type="chains" value="I=1-194"/>
</dbReference>
<dbReference type="PDB" id="6P4H">
    <property type="method" value="EM"/>
    <property type="resolution" value="3.20 A"/>
    <property type="chains" value="I=1-194"/>
</dbReference>
<dbReference type="PDB" id="6P5I">
    <property type="method" value="EM"/>
    <property type="resolution" value="3.10 A"/>
    <property type="chains" value="I=1-194"/>
</dbReference>
<dbReference type="PDB" id="6P5J">
    <property type="method" value="EM"/>
    <property type="resolution" value="3.10 A"/>
    <property type="chains" value="I=1-194"/>
</dbReference>
<dbReference type="PDB" id="6P5K">
    <property type="method" value="EM"/>
    <property type="resolution" value="3.10 A"/>
    <property type="chains" value="I=1-194"/>
</dbReference>
<dbReference type="PDB" id="6P5N">
    <property type="method" value="EM"/>
    <property type="resolution" value="3.20 A"/>
    <property type="chains" value="I=1-194"/>
</dbReference>
<dbReference type="PDB" id="6R5Q">
    <property type="method" value="EM"/>
    <property type="resolution" value="3.00 A"/>
    <property type="chains" value="BB=6-194"/>
</dbReference>
<dbReference type="PDB" id="6R6G">
    <property type="method" value="EM"/>
    <property type="resolution" value="3.70 A"/>
    <property type="chains" value="BB=6-194"/>
</dbReference>
<dbReference type="PDB" id="6R6P">
    <property type="method" value="EM"/>
    <property type="resolution" value="3.10 A"/>
    <property type="chains" value="y=6-194"/>
</dbReference>
<dbReference type="PDB" id="6R7Q">
    <property type="method" value="EM"/>
    <property type="resolution" value="3.90 A"/>
    <property type="chains" value="BB=6-194"/>
</dbReference>
<dbReference type="PDB" id="6SGC">
    <property type="method" value="EM"/>
    <property type="resolution" value="2.80 A"/>
    <property type="chains" value="I1=1-194"/>
</dbReference>
<dbReference type="PDB" id="6W2S">
    <property type="method" value="EM"/>
    <property type="resolution" value="3.00 A"/>
    <property type="chains" value="I=1-194"/>
</dbReference>
<dbReference type="PDB" id="6W2T">
    <property type="method" value="EM"/>
    <property type="resolution" value="3.36 A"/>
    <property type="chains" value="I=1-194"/>
</dbReference>
<dbReference type="PDB" id="6YAL">
    <property type="method" value="EM"/>
    <property type="resolution" value="3.00 A"/>
    <property type="chains" value="J=3-194"/>
</dbReference>
<dbReference type="PDB" id="6YAM">
    <property type="method" value="EM"/>
    <property type="resolution" value="3.60 A"/>
    <property type="chains" value="J=5-194"/>
</dbReference>
<dbReference type="PDB" id="6YAN">
    <property type="method" value="EM"/>
    <property type="resolution" value="3.48 A"/>
    <property type="chains" value="J=5-194"/>
</dbReference>
<dbReference type="PDB" id="7JQB">
    <property type="method" value="EM"/>
    <property type="resolution" value="2.70 A"/>
    <property type="chains" value="I=1-194"/>
</dbReference>
<dbReference type="PDB" id="7JQC">
    <property type="method" value="EM"/>
    <property type="resolution" value="3.30 A"/>
    <property type="chains" value="I=1-194"/>
</dbReference>
<dbReference type="PDB" id="7MDZ">
    <property type="method" value="EM"/>
    <property type="resolution" value="3.20 A"/>
    <property type="chains" value="HH=1-194"/>
</dbReference>
<dbReference type="PDB" id="7NWG">
    <property type="method" value="EM"/>
    <property type="resolution" value="3.80 A"/>
    <property type="chains" value="I2=5-194"/>
</dbReference>
<dbReference type="PDB" id="7NWI">
    <property type="method" value="EM"/>
    <property type="resolution" value="3.13 A"/>
    <property type="chains" value="HH=5-194"/>
</dbReference>
<dbReference type="PDB" id="7O7Y">
    <property type="method" value="EM"/>
    <property type="resolution" value="2.20 A"/>
    <property type="chains" value="Ag=1-194"/>
</dbReference>
<dbReference type="PDB" id="7O7Z">
    <property type="method" value="EM"/>
    <property type="resolution" value="2.40 A"/>
    <property type="chains" value="Ag=1-194"/>
</dbReference>
<dbReference type="PDB" id="7O80">
    <property type="method" value="EM"/>
    <property type="resolution" value="2.90 A"/>
    <property type="chains" value="Ag=1-194"/>
</dbReference>
<dbReference type="PDB" id="7O81">
    <property type="method" value="EM"/>
    <property type="resolution" value="3.10 A"/>
    <property type="chains" value="Ag=1-194"/>
</dbReference>
<dbReference type="PDB" id="7OYD">
    <property type="method" value="EM"/>
    <property type="resolution" value="2.30 A"/>
    <property type="chains" value="HH=1-194"/>
</dbReference>
<dbReference type="PDB" id="7SYG">
    <property type="method" value="EM"/>
    <property type="resolution" value="4.30 A"/>
    <property type="chains" value="I=1-194"/>
</dbReference>
<dbReference type="PDB" id="7SYH">
    <property type="method" value="EM"/>
    <property type="resolution" value="4.60 A"/>
    <property type="chains" value="I=1-194"/>
</dbReference>
<dbReference type="PDB" id="7SYI">
    <property type="method" value="EM"/>
    <property type="resolution" value="4.50 A"/>
    <property type="chains" value="I=1-194"/>
</dbReference>
<dbReference type="PDB" id="7SYJ">
    <property type="method" value="EM"/>
    <property type="resolution" value="4.80 A"/>
    <property type="chains" value="I=1-194"/>
</dbReference>
<dbReference type="PDB" id="7SYK">
    <property type="method" value="EM"/>
    <property type="resolution" value="4.20 A"/>
    <property type="chains" value="I=1-194"/>
</dbReference>
<dbReference type="PDB" id="7SYL">
    <property type="method" value="EM"/>
    <property type="resolution" value="4.50 A"/>
    <property type="chains" value="I=1-194"/>
</dbReference>
<dbReference type="PDB" id="7SYM">
    <property type="method" value="EM"/>
    <property type="resolution" value="4.80 A"/>
    <property type="chains" value="I=1-194"/>
</dbReference>
<dbReference type="PDB" id="7SYN">
    <property type="method" value="EM"/>
    <property type="resolution" value="4.00 A"/>
    <property type="chains" value="I=1-194"/>
</dbReference>
<dbReference type="PDB" id="7SYO">
    <property type="method" value="EM"/>
    <property type="resolution" value="4.60 A"/>
    <property type="chains" value="I=1-194"/>
</dbReference>
<dbReference type="PDB" id="7SYP">
    <property type="method" value="EM"/>
    <property type="resolution" value="4.00 A"/>
    <property type="chains" value="I=1-194"/>
</dbReference>
<dbReference type="PDB" id="7SYQ">
    <property type="method" value="EM"/>
    <property type="resolution" value="3.80 A"/>
    <property type="chains" value="I=1-194"/>
</dbReference>
<dbReference type="PDB" id="7SYR">
    <property type="method" value="EM"/>
    <property type="resolution" value="3.60 A"/>
    <property type="chains" value="I=1-194"/>
</dbReference>
<dbReference type="PDB" id="7SYS">
    <property type="method" value="EM"/>
    <property type="resolution" value="3.50 A"/>
    <property type="chains" value="I=1-194"/>
</dbReference>
<dbReference type="PDB" id="7SYT">
    <property type="method" value="EM"/>
    <property type="resolution" value="4.40 A"/>
    <property type="chains" value="I=1-194"/>
</dbReference>
<dbReference type="PDB" id="7SYU">
    <property type="method" value="EM"/>
    <property type="resolution" value="4.60 A"/>
    <property type="chains" value="I=1-194"/>
</dbReference>
<dbReference type="PDB" id="7SYV">
    <property type="method" value="EM"/>
    <property type="resolution" value="3.90 A"/>
    <property type="chains" value="I=1-194"/>
</dbReference>
<dbReference type="PDB" id="7SYW">
    <property type="method" value="EM"/>
    <property type="resolution" value="3.70 A"/>
    <property type="chains" value="I=1-194"/>
</dbReference>
<dbReference type="PDB" id="7SYX">
    <property type="method" value="EM"/>
    <property type="resolution" value="3.70 A"/>
    <property type="chains" value="I=1-194"/>
</dbReference>
<dbReference type="PDB" id="7ZJW">
    <property type="method" value="EM"/>
    <property type="resolution" value="2.80 A"/>
    <property type="chains" value="SS=1-194"/>
</dbReference>
<dbReference type="PDB" id="7ZJX">
    <property type="method" value="EM"/>
    <property type="resolution" value="3.10 A"/>
    <property type="chains" value="SS=1-194"/>
</dbReference>
<dbReference type="PDB" id="8BTK">
    <property type="method" value="EM"/>
    <property type="resolution" value="3.50 A"/>
    <property type="chains" value="Ag=1-194"/>
</dbReference>
<dbReference type="PDB" id="8P03">
    <property type="method" value="EM"/>
    <property type="resolution" value="3.04 A"/>
    <property type="chains" value="J=5-194"/>
</dbReference>
<dbReference type="PDB" id="8P09">
    <property type="method" value="EM"/>
    <property type="resolution" value="3.30 A"/>
    <property type="chains" value="J=5-194"/>
</dbReference>
<dbReference type="PDB" id="8P2K">
    <property type="method" value="EM"/>
    <property type="resolution" value="2.90 A"/>
    <property type="chains" value="Ag=1-194"/>
</dbReference>
<dbReference type="PDB" id="8SCB">
    <property type="method" value="EM"/>
    <property type="resolution" value="2.50 A"/>
    <property type="chains" value="HH=1-194"/>
</dbReference>
<dbReference type="PDB" id="8VFT">
    <property type="method" value="EM"/>
    <property type="resolution" value="3.30 A"/>
    <property type="chains" value="HH=1-194"/>
</dbReference>
<dbReference type="PDB" id="9BDL">
    <property type="method" value="EM"/>
    <property type="resolution" value="2.80 A"/>
    <property type="chains" value="AS07=6-194"/>
</dbReference>
<dbReference type="PDB" id="9BDN">
    <property type="method" value="EM"/>
    <property type="resolution" value="3.10 A"/>
    <property type="chains" value="AS07=6-194"/>
</dbReference>
<dbReference type="PDB" id="9BDP">
    <property type="method" value="EM"/>
    <property type="resolution" value="3.70 A"/>
    <property type="chains" value="AS07=6-194"/>
</dbReference>
<dbReference type="PDB" id="9C8K">
    <property type="method" value="EM"/>
    <property type="resolution" value="3.10 A"/>
    <property type="chains" value="H=1-194"/>
</dbReference>
<dbReference type="PDB" id="9F1B">
    <property type="method" value="EM"/>
    <property type="resolution" value="3.01 A"/>
    <property type="chains" value="Ag=1-194"/>
</dbReference>
<dbReference type="PDB" id="9F1C">
    <property type="method" value="EM"/>
    <property type="resolution" value="3.78 A"/>
    <property type="chains" value="Ag=1-194"/>
</dbReference>
<dbReference type="PDB" id="9F1D">
    <property type="method" value="EM"/>
    <property type="resolution" value="3.26 A"/>
    <property type="chains" value="Ag=1-194"/>
</dbReference>
<dbReference type="PDBsum" id="3JAG"/>
<dbReference type="PDBsum" id="3JAH"/>
<dbReference type="PDBsum" id="3JAI"/>
<dbReference type="PDBsum" id="4D5L"/>
<dbReference type="PDBsum" id="4D61"/>
<dbReference type="PDBsum" id="4KZX"/>
<dbReference type="PDBsum" id="4KZY"/>
<dbReference type="PDBsum" id="4KZZ"/>
<dbReference type="PDBsum" id="5K0Y"/>
<dbReference type="PDBsum" id="5LZS"/>
<dbReference type="PDBsum" id="5LZT"/>
<dbReference type="PDBsum" id="5LZU"/>
<dbReference type="PDBsum" id="5LZV"/>
<dbReference type="PDBsum" id="5LZW"/>
<dbReference type="PDBsum" id="5LZX"/>
<dbReference type="PDBsum" id="5LZY"/>
<dbReference type="PDBsum" id="5LZZ"/>
<dbReference type="PDBsum" id="6D90"/>
<dbReference type="PDBsum" id="6D9J"/>
<dbReference type="PDBsum" id="6GZ3"/>
<dbReference type="PDBsum" id="6HCF"/>
<dbReference type="PDBsum" id="6HCJ"/>
<dbReference type="PDBsum" id="6HCM"/>
<dbReference type="PDBsum" id="6HCQ"/>
<dbReference type="PDBsum" id="6MTB"/>
<dbReference type="PDBsum" id="6MTC"/>
<dbReference type="PDBsum" id="6MTD"/>
<dbReference type="PDBsum" id="6MTE"/>
<dbReference type="PDBsum" id="6P4G"/>
<dbReference type="PDBsum" id="6P4H"/>
<dbReference type="PDBsum" id="6P5I"/>
<dbReference type="PDBsum" id="6P5J"/>
<dbReference type="PDBsum" id="6P5K"/>
<dbReference type="PDBsum" id="6P5N"/>
<dbReference type="PDBsum" id="6R5Q"/>
<dbReference type="PDBsum" id="6R6G"/>
<dbReference type="PDBsum" id="6R6P"/>
<dbReference type="PDBsum" id="6R7Q"/>
<dbReference type="PDBsum" id="6SGC"/>
<dbReference type="PDBsum" id="6W2S"/>
<dbReference type="PDBsum" id="6W2T"/>
<dbReference type="PDBsum" id="6YAL"/>
<dbReference type="PDBsum" id="6YAM"/>
<dbReference type="PDBsum" id="6YAN"/>
<dbReference type="PDBsum" id="7JQB"/>
<dbReference type="PDBsum" id="7JQC"/>
<dbReference type="PDBsum" id="7MDZ"/>
<dbReference type="PDBsum" id="7NWG"/>
<dbReference type="PDBsum" id="7NWI"/>
<dbReference type="PDBsum" id="7O7Y"/>
<dbReference type="PDBsum" id="7O7Z"/>
<dbReference type="PDBsum" id="7O80"/>
<dbReference type="PDBsum" id="7O81"/>
<dbReference type="PDBsum" id="7OYD"/>
<dbReference type="PDBsum" id="7SYG"/>
<dbReference type="PDBsum" id="7SYH"/>
<dbReference type="PDBsum" id="7SYI"/>
<dbReference type="PDBsum" id="7SYJ"/>
<dbReference type="PDBsum" id="7SYK"/>
<dbReference type="PDBsum" id="7SYL"/>
<dbReference type="PDBsum" id="7SYM"/>
<dbReference type="PDBsum" id="7SYN"/>
<dbReference type="PDBsum" id="7SYO"/>
<dbReference type="PDBsum" id="7SYP"/>
<dbReference type="PDBsum" id="7SYQ"/>
<dbReference type="PDBsum" id="7SYR"/>
<dbReference type="PDBsum" id="7SYS"/>
<dbReference type="PDBsum" id="7SYT"/>
<dbReference type="PDBsum" id="7SYU"/>
<dbReference type="PDBsum" id="7SYV"/>
<dbReference type="PDBsum" id="7SYW"/>
<dbReference type="PDBsum" id="7SYX"/>
<dbReference type="PDBsum" id="7ZJW"/>
<dbReference type="PDBsum" id="7ZJX"/>
<dbReference type="PDBsum" id="8BTK"/>
<dbReference type="PDBsum" id="8P03"/>
<dbReference type="PDBsum" id="8P09"/>
<dbReference type="PDBsum" id="8P2K"/>
<dbReference type="PDBsum" id="8SCB"/>
<dbReference type="PDBsum" id="8VFT"/>
<dbReference type="PDBsum" id="9BDL"/>
<dbReference type="PDBsum" id="9BDN"/>
<dbReference type="PDBsum" id="9BDP"/>
<dbReference type="PDBsum" id="9C8K"/>
<dbReference type="PDBsum" id="9F1B"/>
<dbReference type="PDBsum" id="9F1C"/>
<dbReference type="PDBsum" id="9F1D"/>
<dbReference type="EMDB" id="EMD-0098"/>
<dbReference type="EMDB" id="EMD-0099"/>
<dbReference type="EMDB" id="EMD-0100"/>
<dbReference type="EMDB" id="EMD-0192"/>
<dbReference type="EMDB" id="EMD-0194"/>
<dbReference type="EMDB" id="EMD-0195"/>
<dbReference type="EMDB" id="EMD-0197"/>
<dbReference type="EMDB" id="EMD-10181"/>
<dbReference type="EMDB" id="EMD-10760"/>
<dbReference type="EMDB" id="EMD-10761"/>
<dbReference type="EMDB" id="EMD-10762"/>
<dbReference type="EMDB" id="EMD-12631"/>
<dbReference type="EMDB" id="EMD-12632"/>
<dbReference type="EMDB" id="EMD-12633"/>
<dbReference type="EMDB" id="EMD-12756"/>
<dbReference type="EMDB" id="EMD-12757"/>
<dbReference type="EMDB" id="EMD-12758"/>
<dbReference type="EMDB" id="EMD-12759"/>
<dbReference type="EMDB" id="EMD-13114"/>
<dbReference type="EMDB" id="EMD-14751"/>
<dbReference type="EMDB" id="EMD-14752"/>
<dbReference type="EMDB" id="EMD-16232"/>
<dbReference type="EMDB" id="EMD-17329"/>
<dbReference type="EMDB" id="EMD-17330"/>
<dbReference type="EMDB" id="EMD-17367"/>
<dbReference type="EMDB" id="EMD-20248"/>
<dbReference type="EMDB" id="EMD-20249"/>
<dbReference type="EMDB" id="EMD-20255"/>
<dbReference type="EMDB" id="EMD-20256"/>
<dbReference type="EMDB" id="EMD-20257"/>
<dbReference type="EMDB" id="EMD-20258"/>
<dbReference type="EMDB" id="EMD-21529"/>
<dbReference type="EMDB" id="EMD-21530"/>
<dbReference type="EMDB" id="EMD-22432"/>
<dbReference type="EMDB" id="EMD-22433"/>
<dbReference type="EMDB" id="EMD-23785"/>
<dbReference type="EMDB" id="EMD-25527"/>
<dbReference type="EMDB" id="EMD-25528"/>
<dbReference type="EMDB" id="EMD-25529"/>
<dbReference type="EMDB" id="EMD-25530"/>
<dbReference type="EMDB" id="EMD-25531"/>
<dbReference type="EMDB" id="EMD-25532"/>
<dbReference type="EMDB" id="EMD-25533"/>
<dbReference type="EMDB" id="EMD-25534"/>
<dbReference type="EMDB" id="EMD-25535"/>
<dbReference type="EMDB" id="EMD-25536"/>
<dbReference type="EMDB" id="EMD-25537"/>
<dbReference type="EMDB" id="EMD-25538"/>
<dbReference type="EMDB" id="EMD-25539"/>
<dbReference type="EMDB" id="EMD-25540"/>
<dbReference type="EMDB" id="EMD-25541"/>
<dbReference type="EMDB" id="EMD-25542"/>
<dbReference type="EMDB" id="EMD-25543"/>
<dbReference type="EMDB" id="EMD-25544"/>
<dbReference type="EMDB" id="EMD-26035"/>
<dbReference type="EMDB" id="EMD-26036"/>
<dbReference type="EMDB" id="EMD-40344"/>
<dbReference type="EMDB" id="EMD-4130"/>
<dbReference type="EMDB" id="EMD-4131"/>
<dbReference type="EMDB" id="EMD-4132"/>
<dbReference type="EMDB" id="EMD-4133"/>
<dbReference type="EMDB" id="EMD-4134"/>
<dbReference type="EMDB" id="EMD-4135"/>
<dbReference type="EMDB" id="EMD-4136"/>
<dbReference type="EMDB" id="EMD-4137"/>
<dbReference type="EMDB" id="EMD-43189"/>
<dbReference type="EMDB" id="EMD-44461"/>
<dbReference type="EMDB" id="EMD-44463"/>
<dbReference type="EMDB" id="EMD-44464"/>
<dbReference type="EMDB" id="EMD-45307"/>
<dbReference type="EMDB" id="EMD-4729"/>
<dbReference type="EMDB" id="EMD-4735"/>
<dbReference type="EMDB" id="EMD-4737"/>
<dbReference type="EMDB" id="EMD-4745"/>
<dbReference type="EMDB" id="EMD-50124"/>
<dbReference type="EMDB" id="EMD-50125"/>
<dbReference type="EMDB" id="EMD-50126"/>
<dbReference type="EMDB" id="EMD-7834"/>
<dbReference type="EMDB" id="EMD-7836"/>
<dbReference type="EMDB" id="EMD-8190"/>
<dbReference type="EMDB" id="EMD-9237"/>
<dbReference type="EMDB" id="EMD-9239"/>
<dbReference type="EMDB" id="EMD-9240"/>
<dbReference type="EMDB" id="EMD-9242"/>
<dbReference type="SMR" id="G1SVB0"/>
<dbReference type="IntAct" id="G1SVB0">
    <property type="interactions" value="1"/>
</dbReference>
<dbReference type="GeneID" id="100345715"/>
<dbReference type="KEGG" id="ocu:100345715"/>
<dbReference type="CTD" id="6201"/>
<dbReference type="eggNOG" id="KOG3320">
    <property type="taxonomic scope" value="Eukaryota"/>
</dbReference>
<dbReference type="HOGENOM" id="CLU_088621_1_2_1"/>
<dbReference type="OMA" id="AAYHKVQ"/>
<dbReference type="TreeFam" id="TF343364"/>
<dbReference type="EvolutionaryTrace" id="G1SVB0"/>
<dbReference type="Proteomes" id="UP000001811">
    <property type="component" value="Unplaced"/>
</dbReference>
<dbReference type="Bgee" id="ENSOCUG00000008507">
    <property type="expression patterns" value="Expressed in left lung and 15 other cell types or tissues"/>
</dbReference>
<dbReference type="GO" id="GO:0030686">
    <property type="term" value="C:90S preribosome"/>
    <property type="evidence" value="ECO:0007669"/>
    <property type="project" value="TreeGrafter"/>
</dbReference>
<dbReference type="GO" id="GO:0005813">
    <property type="term" value="C:centrosome"/>
    <property type="evidence" value="ECO:0007669"/>
    <property type="project" value="UniProtKB-SubCell"/>
</dbReference>
<dbReference type="GO" id="GO:0022626">
    <property type="term" value="C:cytosolic ribosome"/>
    <property type="evidence" value="ECO:0000314"/>
    <property type="project" value="UniProtKB"/>
</dbReference>
<dbReference type="GO" id="GO:0022627">
    <property type="term" value="C:cytosolic small ribosomal subunit"/>
    <property type="evidence" value="ECO:0007669"/>
    <property type="project" value="TreeGrafter"/>
</dbReference>
<dbReference type="GO" id="GO:0005730">
    <property type="term" value="C:nucleolus"/>
    <property type="evidence" value="ECO:0007669"/>
    <property type="project" value="UniProtKB-SubCell"/>
</dbReference>
<dbReference type="GO" id="GO:0032040">
    <property type="term" value="C:small-subunit processome"/>
    <property type="evidence" value="ECO:0007669"/>
    <property type="project" value="TreeGrafter"/>
</dbReference>
<dbReference type="GO" id="GO:0003735">
    <property type="term" value="F:structural constituent of ribosome"/>
    <property type="evidence" value="ECO:0000314"/>
    <property type="project" value="UniProtKB"/>
</dbReference>
<dbReference type="GO" id="GO:0042274">
    <property type="term" value="P:ribosomal small subunit biogenesis"/>
    <property type="evidence" value="ECO:0007669"/>
    <property type="project" value="TreeGrafter"/>
</dbReference>
<dbReference type="GO" id="GO:0006364">
    <property type="term" value="P:rRNA processing"/>
    <property type="evidence" value="ECO:0007669"/>
    <property type="project" value="TreeGrafter"/>
</dbReference>
<dbReference type="GO" id="GO:0006412">
    <property type="term" value="P:translation"/>
    <property type="evidence" value="ECO:0007669"/>
    <property type="project" value="InterPro"/>
</dbReference>
<dbReference type="InterPro" id="IPR000554">
    <property type="entry name" value="Ribosomal_eS7"/>
</dbReference>
<dbReference type="InterPro" id="IPR047861">
    <property type="entry name" value="Ribosomal_eS7_CS"/>
</dbReference>
<dbReference type="PANTHER" id="PTHR11278">
    <property type="entry name" value="40S RIBOSOMAL PROTEIN S7"/>
    <property type="match status" value="1"/>
</dbReference>
<dbReference type="PANTHER" id="PTHR11278:SF0">
    <property type="entry name" value="SMALL RIBOSOMAL SUBUNIT PROTEIN ES7"/>
    <property type="match status" value="1"/>
</dbReference>
<dbReference type="Pfam" id="PF01251">
    <property type="entry name" value="Ribosomal_S7e"/>
    <property type="match status" value="1"/>
</dbReference>
<dbReference type="PROSITE" id="PS00948">
    <property type="entry name" value="RIBOSOMAL_S7E"/>
    <property type="match status" value="1"/>
</dbReference>
<reference key="1">
    <citation type="journal article" date="2011" name="Nature">
        <title>A high-resolution map of human evolutionary constraint using 29 mammals.</title>
        <authorList>
            <person name="Lindblad-Toh K."/>
            <person name="Garber M."/>
            <person name="Zuk O."/>
            <person name="Lin M.F."/>
            <person name="Parker B.J."/>
            <person name="Washietl S."/>
            <person name="Kheradpour P."/>
            <person name="Ernst J."/>
            <person name="Jordan G."/>
            <person name="Mauceli E."/>
            <person name="Ward L.D."/>
            <person name="Lowe C.B."/>
            <person name="Holloway A.K."/>
            <person name="Clamp M."/>
            <person name="Gnerre S."/>
            <person name="Alfoldi J."/>
            <person name="Beal K."/>
            <person name="Chang J."/>
            <person name="Clawson H."/>
            <person name="Cuff J."/>
            <person name="Di Palma F."/>
            <person name="Fitzgerald S."/>
            <person name="Flicek P."/>
            <person name="Guttman M."/>
            <person name="Hubisz M.J."/>
            <person name="Jaffe D.B."/>
            <person name="Jungreis I."/>
            <person name="Kent W.J."/>
            <person name="Kostka D."/>
            <person name="Lara M."/>
            <person name="Martins A.L."/>
            <person name="Massingham T."/>
            <person name="Moltke I."/>
            <person name="Raney B.J."/>
            <person name="Rasmussen M.D."/>
            <person name="Robinson J."/>
            <person name="Stark A."/>
            <person name="Vilella A.J."/>
            <person name="Wen J."/>
            <person name="Xie X."/>
            <person name="Zody M.C."/>
            <person name="Baldwin J."/>
            <person name="Bloom T."/>
            <person name="Chin C.W."/>
            <person name="Heiman D."/>
            <person name="Nicol R."/>
            <person name="Nusbaum C."/>
            <person name="Young S."/>
            <person name="Wilkinson J."/>
            <person name="Worley K.C."/>
            <person name="Kovar C.L."/>
            <person name="Muzny D.M."/>
            <person name="Gibbs R.A."/>
            <person name="Cree A."/>
            <person name="Dihn H.H."/>
            <person name="Fowler G."/>
            <person name="Jhangiani S."/>
            <person name="Joshi V."/>
            <person name="Lee S."/>
            <person name="Lewis L.R."/>
            <person name="Nazareth L.V."/>
            <person name="Okwuonu G."/>
            <person name="Santibanez J."/>
            <person name="Warren W.C."/>
            <person name="Mardis E.R."/>
            <person name="Weinstock G.M."/>
            <person name="Wilson R.K."/>
            <person name="Delehaunty K."/>
            <person name="Dooling D."/>
            <person name="Fronik C."/>
            <person name="Fulton L."/>
            <person name="Fulton B."/>
            <person name="Graves T."/>
            <person name="Minx P."/>
            <person name="Sodergren E."/>
            <person name="Birney E."/>
            <person name="Margulies E.H."/>
            <person name="Herrero J."/>
            <person name="Green E.D."/>
            <person name="Haussler D."/>
            <person name="Siepel A."/>
            <person name="Goldman N."/>
            <person name="Pollard K.S."/>
            <person name="Pedersen J.S."/>
            <person name="Lander E.S."/>
            <person name="Kellis M."/>
        </authorList>
    </citation>
    <scope>NUCLEOTIDE SEQUENCE [LARGE SCALE GENOMIC DNA]</scope>
    <source>
        <strain>Thorbecke</strain>
    </source>
</reference>
<reference evidence="22 23" key="2">
    <citation type="journal article" date="2013" name="Nature">
        <title>The initiation of mammalian protein synthesis and mRNA scanning mechanism.</title>
        <authorList>
            <person name="Lomakin I.B."/>
            <person name="Steitz T.A."/>
        </authorList>
    </citation>
    <scope>X-RAY CRYSTALLOGRAPHY (7.01 ANGSTROMS) OF 40S RIBOSOME</scope>
    <scope>FUNCTION</scope>
    <scope>SUBUNIT</scope>
    <scope>SUBCELLULAR LOCATION</scope>
</reference>
<reference evidence="20 21" key="3">
    <citation type="journal article" date="2015" name="Mol. Cell">
        <title>Cryo-EM of ribosomal 80S complexes with termination factors reveals the translocated cricket paralysis virus IRES.</title>
        <authorList>
            <person name="Muhs M."/>
            <person name="Hilal T."/>
            <person name="Mielke T."/>
            <person name="Skabkin M.A."/>
            <person name="Sanbonmatsu K.Y."/>
            <person name="Pestova T.V."/>
            <person name="Spahn C.M."/>
        </authorList>
    </citation>
    <scope>STRUCTURE BY ELECTRON MICROSCOPY (9.00 ANGSTROMS) OF RIBOSOME</scope>
    <scope>FUNCTION</scope>
    <scope>SUBUNIT</scope>
    <scope>SUBCELLULAR LOCATION</scope>
</reference>
<reference evidence="18 19" key="4">
    <citation type="journal article" date="2015" name="Nature">
        <title>Structural basis for stop codon recognition in eukaryotes.</title>
        <authorList>
            <person name="Brown A."/>
            <person name="Shao S."/>
            <person name="Murray J."/>
            <person name="Hegde R.S."/>
            <person name="Ramakrishnan V."/>
        </authorList>
    </citation>
    <scope>STRUCTURE BY ELECTRON MICROSCOPY (3.45 ANGSTROMS) OF RIBOSOME</scope>
    <scope>FUNCTION</scope>
    <scope>SUBCELLULAR LOCATION</scope>
    <scope>SUBUNIT</scope>
</reference>
<reference evidence="24 25" key="5">
    <citation type="journal article" date="2016" name="Cell">
        <title>Decoding mammalian ribosome-mRNA states by translational GTPase complexes.</title>
        <authorList>
            <person name="Shao S."/>
            <person name="Murray J."/>
            <person name="Brown A."/>
            <person name="Taunton J."/>
            <person name="Ramakrishnan V."/>
            <person name="Hegde R.S."/>
        </authorList>
    </citation>
    <scope>STRUCTURE BY ELECTRON MICROSCOPY (3.31 ANGSTROMS) OF RIBOSOME</scope>
    <scope>FUNCTION</scope>
    <scope>SUBCELLULAR LOCATION</scope>
    <scope>SUBUNIT</scope>
</reference>
<reference evidence="28" key="6">
    <citation type="journal article" date="2018" name="Cell Rep.">
        <title>tRNA translocation by the eukaryotic 80S ribosome and the impact of GTP hydrolysis.</title>
        <authorList>
            <person name="Flis J."/>
            <person name="Holm M."/>
            <person name="Rundlet E.J."/>
            <person name="Loerke J."/>
            <person name="Hilal T."/>
            <person name="Dabrowski M."/>
            <person name="Burger J."/>
            <person name="Mielke T."/>
            <person name="Blanchard S.C."/>
            <person name="Spahn C.M.T."/>
            <person name="Budkevich T.V."/>
        </authorList>
    </citation>
    <scope>STRUCTURE BY ELECTRON MICROSCOPY (3.60 ANGSTROMS) OF RIBOSOME</scope>
    <scope>FUNCTION</scope>
    <scope>SUBCELLULAR LOCATION</scope>
    <scope>SUBUNIT</scope>
</reference>
<reference evidence="26 27" key="7">
    <citation type="journal article" date="2018" name="Elife">
        <title>Dual tRNA mimicry in the Cricket paralysis virus IRES uncovers an unexpected similarity with the Hepatitis C Virus IRES.</title>
        <authorList>
            <person name="Pisareva V.P."/>
            <person name="Pisarev A.V."/>
            <person name="Fernandez I.S."/>
        </authorList>
    </citation>
    <scope>STRUCTURE BY ELECTRON MICROSCOPY (3.20 ANGSTROMS) OF RIBOSOME</scope>
    <scope>SUBCELLULAR LOCATION</scope>
    <scope>SUBUNIT</scope>
</reference>
<reference evidence="31 32" key="8">
    <citation type="journal article" date="2018" name="Elife">
        <title>Structures of translationally inactive mammalian ribosomes.</title>
        <authorList>
            <person name="Brown A."/>
            <person name="Baird M.R."/>
            <person name="Yip M.C."/>
            <person name="Murray J."/>
            <person name="Shao S."/>
        </authorList>
    </citation>
    <scope>STRUCTURE BY ELECTRON MICROSCOPY (3.30 ANGSTROMS) OF RIBOSOME</scope>
    <scope>SUBCELLULAR LOCATION</scope>
    <scope>SUBUNIT</scope>
</reference>
<reference evidence="29 30" key="9">
    <citation type="journal article" date="2018" name="Mol. Cell">
        <title>ZNF598 is a quality control sensor of collided ribosomes.</title>
        <authorList>
            <person name="Juszkiewicz S."/>
            <person name="Chandrasekaran V."/>
            <person name="Lin Z."/>
            <person name="Kraatz S."/>
            <person name="Ramakrishnan V."/>
            <person name="Hegde R.S."/>
        </authorList>
    </citation>
    <scope>STRUCTURE BY ELECTRON MICROSCOPY (3.80 ANGSTROMS) OF RIBOSOME</scope>
    <scope>SUBCELLULAR LOCATION</scope>
    <scope>SUBUNIT</scope>
</reference>
<reference evidence="35 36" key="10">
    <citation type="journal article" date="2019" name="Elife">
        <title>Structural and mutational analysis of the ribosome-arresting human XBP1u.</title>
        <authorList>
            <person name="Shanmuganathan V."/>
            <person name="Schiller N."/>
            <person name="Magoulopoulou A."/>
            <person name="Cheng J."/>
            <person name="Braunger K."/>
            <person name="Cymer F."/>
            <person name="Berninghausen O."/>
            <person name="Beatrix B."/>
            <person name="Kohno K."/>
            <person name="von Heijne G."/>
            <person name="Beckmann R."/>
        </authorList>
    </citation>
    <scope>STRUCTURE BY ELECTRON MICROSCOPY (3.00 ANGSTROMS) OF RIBOSOME</scope>
    <scope>SUBCELLULAR LOCATION</scope>
    <scope>SUBUNIT</scope>
</reference>
<reference evidence="33 34" key="11">
    <citation type="journal article" date="2019" name="EMBO J.">
        <title>The Israeli acute paralysis virus IRES captures host ribosomes by mimicking a ribosomal state with hybrid tRNAs.</title>
        <authorList>
            <person name="Acosta-Reyes F."/>
            <person name="Neupane R."/>
            <person name="Frank J."/>
            <person name="Fernandez I.S."/>
        </authorList>
    </citation>
    <scope>STRUCTURE BY ELECTRON MICROSCOPY (3.10 ANGSTROMS) OF RIBOSOME</scope>
    <scope>SUBCELLULAR LOCATION</scope>
    <scope>SUBUNIT</scope>
</reference>
<reference evidence="37" key="12">
    <citation type="journal article" date="2019" name="Nat. Struct. Mol. Biol.">
        <title>Mechanism of ribosome stalling during translation of a poly(A) tail.</title>
        <authorList>
            <person name="Chandrasekaran V."/>
            <person name="Juszkiewicz S."/>
            <person name="Choi J."/>
            <person name="Puglisi J.D."/>
            <person name="Brown A."/>
            <person name="Shao S."/>
            <person name="Ramakrishnan V."/>
            <person name="Hegde R.S."/>
        </authorList>
    </citation>
    <scope>STRUCTURE BY ELECTRON MICROSCOPY (2.80 ANGSTROMS) OF RIBOSOME</scope>
    <scope>SUBCELLULAR LOCATION</scope>
    <scope>SUBUNIT</scope>
</reference>
<reference evidence="38 39" key="13">
    <citation type="journal article" date="2020" name="Elife">
        <title>A complex IRES at the 5'-UTR of a viral mRNA assembles a functional 48S complex via an uAUG intermediate.</title>
        <authorList>
            <person name="Neupane R."/>
            <person name="Pisareva V.P."/>
            <person name="Rodriguez C.F."/>
            <person name="Pisarev A.V."/>
            <person name="Fernandez I.S."/>
        </authorList>
    </citation>
    <scope>STRUCTURE BY ELECTRON MICROSCOPY (3.00 ANGSTROMS) OF RIBOSOME</scope>
    <scope>SUBCELLULAR LOCATION</scope>
    <scope>SUBUNIT</scope>
</reference>
<reference evidence="41 42" key="14">
    <citation type="journal article" date="2022" name="EMBO J.">
        <title>Molecular architecture of 40S translation initiation complexes on the hepatitis C virus IRES.</title>
        <authorList>
            <person name="Brown Z.P."/>
            <person name="Abaeva I.S."/>
            <person name="De S."/>
            <person name="Hellen C.U.T."/>
            <person name="Pestova T.V."/>
            <person name="Frank J."/>
        </authorList>
    </citation>
    <scope>STRUCTURE BY ELECTRON MICROSCOPY (3.50 ANGSTROMS) OF RIBOSOME</scope>
    <scope>SUBCELLULAR LOCATION</scope>
    <scope>SUBUNIT</scope>
</reference>
<reference evidence="43 44" key="15">
    <citation type="journal article" date="2022" name="Science">
        <title>Structure of the mammalian ribosome as it decodes the selenocysteine UGA codon.</title>
        <authorList>
            <person name="Hilal T."/>
            <person name="Killam B.Y."/>
            <person name="Grozdanovic M."/>
            <person name="Dobosz-Bartoszek M."/>
            <person name="Loerke J."/>
            <person name="Buerger J."/>
            <person name="Mielke T."/>
            <person name="Copeland P.R."/>
            <person name="Simonovic M."/>
            <person name="Spahn C.M.T."/>
        </authorList>
    </citation>
    <scope>STRUCTURE BY ELECTRON MICROSCOPY (2.80 ANGSTROMS) OF RIBOSOME</scope>
    <scope>SUBCELLULAR LOCATION</scope>
    <scope>SUBUNIT</scope>
</reference>
<reference evidence="40" key="16">
    <citation type="journal article" date="2023" name="Nature">
        <title>A molecular network of conserved factors keeps ribosomes dormant in the egg.</title>
        <authorList>
            <person name="Leesch F."/>
            <person name="Lorenzo-Orts L."/>
            <person name="Pribitzer C."/>
            <person name="Grishkovskaya I."/>
            <person name="Roehsner J."/>
            <person name="Chugunova A."/>
            <person name="Matzinger M."/>
            <person name="Roitinger E."/>
            <person name="Belacic K."/>
            <person name="Kandolf S."/>
            <person name="Lin T.Y."/>
            <person name="Mechtler K."/>
            <person name="Meinhart A."/>
            <person name="Haselbach D."/>
            <person name="Pauli A."/>
        </authorList>
    </citation>
    <scope>STRUCTURE BY ELECTRON MICROSCOPY (2.30 ANGSTROMS) OF RIBOSOME</scope>
    <scope>SUBCELLULAR LOCATION</scope>
    <scope>SUBUNIT</scope>
</reference>
<comment type="function">
    <text evidence="1 2 3 4 5 9">Component of the small ribosomal subunit (PubMed:23873042, PubMed:25601755, PubMed:26245381, PubMed:27863242, PubMed:30517857). The ribosome is a large ribonucleoprotein complex responsible for the synthesis of proteins in the cell (PubMed:23873042, PubMed:25601755, PubMed:26245381, PubMed:27863242, PubMed:30517857). Required for rRNA maturation (By similarity). Part of the small subunit (SSU) processome, first precursor of the small eukaryotic ribosomal subunit (PubMed:23873042, PubMed:25601755, PubMed:26245381, PubMed:27863242, PubMed:30517857). During the assembly of the SSU processome in the nucleolus, many ribosome biogenesis factors, an RNA chaperone and ribosomal proteins associate with the nascent pre-rRNA and work in concert to generate RNA folding, modifications, rearrangements and cleavage as well as targeted degradation of pre-ribosomal RNA by the RNA exosome (PubMed:23873042, PubMed:25601755, PubMed:26245381, PubMed:27863242, PubMed:30517857).</text>
</comment>
<comment type="subunit">
    <text evidence="1 2 3 4 5 6 7 8 9 10 11 12 13 14 15 16">Component of the small ribosomal subunit (PubMed:23873042, PubMed:25601755, PubMed:26245381, PubMed:27863242, PubMed:29856316, PubMed:30293783, PubMed:30355441, PubMed:30517857, PubMed:31246176, PubMed:31609474, PubMed:31768042, PubMed:32286223, PubMed:35709277, PubMed:35822879, PubMed:36653451). Part of the small subunit (SSU) processome, composed of more than 70 proteins and the RNA chaperone small nucleolar RNA (snoRNA) U3 (PubMed:23873042, PubMed:25601755, PubMed:26245381, PubMed:27863242, PubMed:29856316, PubMed:30293783, PubMed:30355441, PubMed:30517857, PubMed:31246176, PubMed:31609474, PubMed:31768042, PubMed:32286223, PubMed:35709277, PubMed:35822879, PubMed:36653451). Binds IPO9 with high affinity (By similarity). Interacts with NEK6 (By similarity). Interacts with DESI2 (By similarity). Interacts with IPO5, IPO7 and KPNB1; these interactions may be involved in RPS7 nuclear import for the assembly of ribosomal subunits (By similarity).</text>
</comment>
<comment type="subcellular location">
    <subcellularLocation>
        <location evidence="1">Cytoplasm</location>
        <location evidence="1">Cytoskeleton</location>
        <location evidence="1">Microtubule organizing center</location>
        <location evidence="1">Centrosome</location>
    </subcellularLocation>
    <subcellularLocation>
        <location evidence="2 3 4 5 6 7 8 9 10 11 12 13 14 15 16">Cytoplasm</location>
    </subcellularLocation>
    <subcellularLocation>
        <location evidence="1">Nucleus</location>
        <location evidence="1">Nucleolus</location>
    </subcellularLocation>
    <text evidence="1">Although RPS7 is functional within the cytoplasm, the assembly of ribosomal subunits occurs in the nucleus. RPS7 nuclear import is mediated by IPO5/RanBP5, IPO7/RanBP7, KPNB1/importin-beta or TPNO1/Trn. Colocalizes with NEK6 in the centrosome.</text>
</comment>
<comment type="PTM">
    <text evidence="1">Phosphorylated by NEK6.</text>
</comment>
<comment type="PTM">
    <text evidence="1">Ubiquitinated. Deubiquitinated by DESI2, leading to its stabilization.</text>
</comment>
<comment type="similarity">
    <text evidence="17">Belongs to the eukaryotic ribosomal protein eS7 family.</text>
</comment>
<keyword id="KW-0002">3D-structure</keyword>
<keyword id="KW-0007">Acetylation</keyword>
<keyword id="KW-0963">Cytoplasm</keyword>
<keyword id="KW-0206">Cytoskeleton</keyword>
<keyword id="KW-1017">Isopeptide bond</keyword>
<keyword id="KW-0539">Nucleus</keyword>
<keyword id="KW-1185">Reference proteome</keyword>
<keyword id="KW-0687">Ribonucleoprotein</keyword>
<keyword id="KW-0689">Ribosomal protein</keyword>
<keyword id="KW-0832">Ubl conjugation</keyword>
<protein>
    <recommendedName>
        <fullName>Small ribosomal subunit protein eS7</fullName>
    </recommendedName>
    <alternativeName>
        <fullName>40S ribosomal protein S7</fullName>
    </alternativeName>
</protein>
<accession>G1SVB0</accession>